<protein>
    <recommendedName>
        <fullName evidence="1">Adaptive-response sensory kinase SasA</fullName>
        <ecNumber evidence="1">2.7.13.3</ecNumber>
    </recommendedName>
    <alternativeName>
        <fullName evidence="1">Sensor histidine kinase SasA</fullName>
    </alternativeName>
</protein>
<sequence>MLKHDSMQVSQDQPIYSEAPLQLLLFVDGRPKSKQQVQRIRAYLKDLQAEYNFELQIIDVGQQPYLAEHFKLVATPALIKIHPEPRQILAGSNIITQLKNLWPRWQAAVDTYVKLQEDLQERVDDNGRVAQPTSTINSVAVSAELLRLSDEIFNLKQEKEKLLEQLQFKDRVIAMLVHDLRNPLTAAAIAIETLQSNYNPDIGQFQRLKPALVVNLLRQARTQAKTIDKMIADLLQVGRGTDTELIIIPQKTEIGLLCLEVLGELRDRYTTKAQKVETDIPQDLPCVYADPERIRQVLINLLDNAIKYTPEGGTISIAGLHRTTQKVQFSIGDTGPGIPTDNRERIFENHYRLERDEAKEGYGIGLSLCQRIIRAHYGQIWVDSNPHGGAWFHFTLPVYPS</sequence>
<evidence type="ECO:0000255" key="1">
    <source>
        <dbReference type="HAMAP-Rule" id="MF_01837"/>
    </source>
</evidence>
<keyword id="KW-0067">ATP-binding</keyword>
<keyword id="KW-0090">Biological rhythms</keyword>
<keyword id="KW-0418">Kinase</keyword>
<keyword id="KW-0547">Nucleotide-binding</keyword>
<keyword id="KW-0597">Phosphoprotein</keyword>
<keyword id="KW-0808">Transferase</keyword>
<keyword id="KW-0902">Two-component regulatory system</keyword>
<organism>
    <name type="scientific">Trichormus variabilis (strain ATCC 29413 / PCC 7937)</name>
    <name type="common">Anabaena variabilis</name>
    <dbReference type="NCBI Taxonomy" id="240292"/>
    <lineage>
        <taxon>Bacteria</taxon>
        <taxon>Bacillati</taxon>
        <taxon>Cyanobacteriota</taxon>
        <taxon>Cyanophyceae</taxon>
        <taxon>Nostocales</taxon>
        <taxon>Nostocaceae</taxon>
        <taxon>Trichormus</taxon>
    </lineage>
</organism>
<proteinExistence type="inferred from homology"/>
<comment type="function">
    <text evidence="1">Member of the two-component regulatory system SasA/RpaA involved in genome-wide circadian gene expression. One of several clock output pathways. Participates in the Kai clock protein complex, the main circadian regulator in cyanobacteria, via its interaction with KaiC. KaiC enhances the autophosphorylation activity of SasA, which then transfers its phosphate group to RpaA to activate it. In addition to its output function, recruits fold-shifted KaiB (KaiB(fs)) to KaiC to cooperatively form the KaiB(6):KaiC(6) complex (independent of SasA kinase activity). Required for robustness of the circadian rhythm of gene expression and is involved in clock output, also required for adaptation to light/dark cycles.</text>
</comment>
<comment type="catalytic activity">
    <reaction evidence="1">
        <text>ATP + protein L-histidine = ADP + protein N-phospho-L-histidine.</text>
        <dbReference type="EC" id="2.7.13.3"/>
    </reaction>
</comment>
<comment type="subunit">
    <text evidence="1">Homooligomerizes. Interacts with KaiC. Participates in the KaiABC clock complex, whose core is composed of a KaiC homohexamer, 6 KaiB and up to 6 KaiA dimers. SasA and KaiB(fs) compete to bind to KaiC.</text>
</comment>
<comment type="domain">
    <text evidence="1">The N-terminus interacts with KaiC, while the C-terminal histidine kinase domain autophosphorylates and is probably responsible for self-oligomerization. The N-terminal domain stimulates the C-terminus to autophosphorylate.</text>
</comment>
<reference key="1">
    <citation type="journal article" date="2014" name="Stand. Genomic Sci.">
        <title>Complete genome sequence of Anabaena variabilis ATCC 29413.</title>
        <authorList>
            <person name="Thiel T."/>
            <person name="Pratte B.S."/>
            <person name="Zhong J."/>
            <person name="Goodwin L."/>
            <person name="Copeland A."/>
            <person name="Lucas S."/>
            <person name="Han C."/>
            <person name="Pitluck S."/>
            <person name="Land M.L."/>
            <person name="Kyrpides N.C."/>
            <person name="Woyke T."/>
        </authorList>
    </citation>
    <scope>NUCLEOTIDE SEQUENCE [LARGE SCALE GENOMIC DNA]</scope>
    <source>
        <strain>ATCC 29413 / PCC 7937</strain>
    </source>
</reference>
<accession>Q3M8A7</accession>
<dbReference type="EC" id="2.7.13.3" evidence="1"/>
<dbReference type="EMBL" id="CP000117">
    <property type="protein sequence ID" value="ABA22779.1"/>
    <property type="molecule type" value="Genomic_DNA"/>
</dbReference>
<dbReference type="SMR" id="Q3M8A7"/>
<dbReference type="STRING" id="240292.Ava_3171"/>
<dbReference type="KEGG" id="ava:Ava_3171"/>
<dbReference type="eggNOG" id="COG2205">
    <property type="taxonomic scope" value="Bacteria"/>
</dbReference>
<dbReference type="HOGENOM" id="CLU_723030_0_0_3"/>
<dbReference type="Proteomes" id="UP000002533">
    <property type="component" value="Chromosome"/>
</dbReference>
<dbReference type="GO" id="GO:0005524">
    <property type="term" value="F:ATP binding"/>
    <property type="evidence" value="ECO:0007669"/>
    <property type="project" value="UniProtKB-KW"/>
</dbReference>
<dbReference type="GO" id="GO:0000155">
    <property type="term" value="F:phosphorelay sensor kinase activity"/>
    <property type="evidence" value="ECO:0007669"/>
    <property type="project" value="InterPro"/>
</dbReference>
<dbReference type="GO" id="GO:0007623">
    <property type="term" value="P:circadian rhythm"/>
    <property type="evidence" value="ECO:0007669"/>
    <property type="project" value="UniProtKB-UniRule"/>
</dbReference>
<dbReference type="CDD" id="cd00075">
    <property type="entry name" value="HATPase"/>
    <property type="match status" value="1"/>
</dbReference>
<dbReference type="CDD" id="cd00082">
    <property type="entry name" value="HisKA"/>
    <property type="match status" value="1"/>
</dbReference>
<dbReference type="CDD" id="cd02978">
    <property type="entry name" value="KaiB_like"/>
    <property type="match status" value="1"/>
</dbReference>
<dbReference type="FunFam" id="3.30.565.10:FF:000006">
    <property type="entry name" value="Sensor histidine kinase WalK"/>
    <property type="match status" value="1"/>
</dbReference>
<dbReference type="Gene3D" id="1.10.287.130">
    <property type="match status" value="1"/>
</dbReference>
<dbReference type="Gene3D" id="3.40.30.10">
    <property type="entry name" value="Glutaredoxin"/>
    <property type="match status" value="1"/>
</dbReference>
<dbReference type="Gene3D" id="3.30.565.10">
    <property type="entry name" value="Histidine kinase-like ATPase, C-terminal domain"/>
    <property type="match status" value="1"/>
</dbReference>
<dbReference type="HAMAP" id="MF_01837">
    <property type="entry name" value="Kinase_SasA"/>
    <property type="match status" value="1"/>
</dbReference>
<dbReference type="InterPro" id="IPR036890">
    <property type="entry name" value="HATPase_C_sf"/>
</dbReference>
<dbReference type="InterPro" id="IPR005467">
    <property type="entry name" value="His_kinase_dom"/>
</dbReference>
<dbReference type="InterPro" id="IPR003661">
    <property type="entry name" value="HisK_dim/P_dom"/>
</dbReference>
<dbReference type="InterPro" id="IPR036097">
    <property type="entry name" value="HisK_dim/P_sf"/>
</dbReference>
<dbReference type="InterPro" id="IPR011649">
    <property type="entry name" value="KaiB_domain"/>
</dbReference>
<dbReference type="InterPro" id="IPR023527">
    <property type="entry name" value="Kinase_SasA"/>
</dbReference>
<dbReference type="InterPro" id="IPR050736">
    <property type="entry name" value="Sensor_HK_Regulatory"/>
</dbReference>
<dbReference type="InterPro" id="IPR004358">
    <property type="entry name" value="Sig_transdc_His_kin-like_C"/>
</dbReference>
<dbReference type="InterPro" id="IPR036249">
    <property type="entry name" value="Thioredoxin-like_sf"/>
</dbReference>
<dbReference type="NCBIfam" id="NF006800">
    <property type="entry name" value="PRK09303.1"/>
    <property type="match status" value="1"/>
</dbReference>
<dbReference type="PANTHER" id="PTHR43711:SF26">
    <property type="entry name" value="SENSOR HISTIDINE KINASE RCSC"/>
    <property type="match status" value="1"/>
</dbReference>
<dbReference type="PANTHER" id="PTHR43711">
    <property type="entry name" value="TWO-COMPONENT HISTIDINE KINASE"/>
    <property type="match status" value="1"/>
</dbReference>
<dbReference type="Pfam" id="PF02518">
    <property type="entry name" value="HATPase_c"/>
    <property type="match status" value="1"/>
</dbReference>
<dbReference type="Pfam" id="PF00512">
    <property type="entry name" value="HisKA"/>
    <property type="match status" value="1"/>
</dbReference>
<dbReference type="Pfam" id="PF07689">
    <property type="entry name" value="KaiB"/>
    <property type="match status" value="1"/>
</dbReference>
<dbReference type="PRINTS" id="PR00344">
    <property type="entry name" value="BCTRLSENSOR"/>
</dbReference>
<dbReference type="SMART" id="SM00387">
    <property type="entry name" value="HATPase_c"/>
    <property type="match status" value="1"/>
</dbReference>
<dbReference type="SMART" id="SM00388">
    <property type="entry name" value="HisKA"/>
    <property type="match status" value="1"/>
</dbReference>
<dbReference type="SMART" id="SM01248">
    <property type="entry name" value="KaiB"/>
    <property type="match status" value="1"/>
</dbReference>
<dbReference type="SUPFAM" id="SSF55874">
    <property type="entry name" value="ATPase domain of HSP90 chaperone/DNA topoisomerase II/histidine kinase"/>
    <property type="match status" value="1"/>
</dbReference>
<dbReference type="SUPFAM" id="SSF47384">
    <property type="entry name" value="Homodimeric domain of signal transducing histidine kinase"/>
    <property type="match status" value="1"/>
</dbReference>
<dbReference type="SUPFAM" id="SSF52833">
    <property type="entry name" value="Thioredoxin-like"/>
    <property type="match status" value="1"/>
</dbReference>
<dbReference type="PROSITE" id="PS50109">
    <property type="entry name" value="HIS_KIN"/>
    <property type="match status" value="1"/>
</dbReference>
<gene>
    <name evidence="1" type="primary">sasA</name>
    <name type="ordered locus">Ava_3171</name>
</gene>
<name>SASA_TRIV2</name>
<feature type="chain" id="PRO_1000088439" description="Adaptive-response sensory kinase SasA">
    <location>
        <begin position="1"/>
        <end position="401"/>
    </location>
</feature>
<feature type="domain" description="Histidine kinase" evidence="1">
    <location>
        <begin position="175"/>
        <end position="400"/>
    </location>
</feature>
<feature type="modified residue" description="Phosphohistidine; by autocatalysis" evidence="1">
    <location>
        <position position="178"/>
    </location>
</feature>